<organism>
    <name type="scientific">Hypocrea virens (strain Gv29-8 / FGSC 10586)</name>
    <name type="common">Gliocladium virens</name>
    <name type="synonym">Trichoderma virens</name>
    <dbReference type="NCBI Taxonomy" id="413071"/>
    <lineage>
        <taxon>Eukaryota</taxon>
        <taxon>Fungi</taxon>
        <taxon>Dikarya</taxon>
        <taxon>Ascomycota</taxon>
        <taxon>Pezizomycotina</taxon>
        <taxon>Sordariomycetes</taxon>
        <taxon>Hypocreomycetidae</taxon>
        <taxon>Hypocreales</taxon>
        <taxon>Hypocreaceae</taxon>
        <taxon>Trichoderma</taxon>
    </lineage>
</organism>
<feature type="chain" id="PRO_0000449279" description="Highly reducing polyketide synthase virA">
    <location>
        <begin position="1"/>
        <end position="2381"/>
    </location>
</feature>
<feature type="domain" description="Ketosynthase family 3 (KS3)" evidence="3 8">
    <location>
        <begin position="1"/>
        <end position="420"/>
    </location>
</feature>
<feature type="domain" description="PKS/mFAS DH" evidence="4">
    <location>
        <begin position="920"/>
        <end position="1235"/>
    </location>
</feature>
<feature type="domain" description="Carrier" evidence="2 8">
    <location>
        <begin position="2297"/>
        <end position="2375"/>
    </location>
</feature>
<feature type="region of interest" description="Malonyl-CoA:ACP transacylase (MAT) domain" evidence="1 8">
    <location>
        <begin position="535"/>
        <end position="851"/>
    </location>
</feature>
<feature type="region of interest" description="Dehydratase (DH) domain" evidence="1 8">
    <location>
        <begin position="920"/>
        <end position="1232"/>
    </location>
</feature>
<feature type="region of interest" description="N-terminal hotdog fold" evidence="4">
    <location>
        <begin position="920"/>
        <end position="1064"/>
    </location>
</feature>
<feature type="region of interest" description="C-terminal hotdog fold" evidence="4">
    <location>
        <begin position="1078"/>
        <end position="1235"/>
    </location>
</feature>
<feature type="region of interest" description="Enoyl reductase (ER) domain" evidence="1 8">
    <location>
        <begin position="1639"/>
        <end position="1956"/>
    </location>
</feature>
<feature type="region of interest" description="Ketoreductase (KR) domain" evidence="1 8">
    <location>
        <begin position="1981"/>
        <end position="2159"/>
    </location>
</feature>
<feature type="active site" description="For beta-ketoacyl synthase activity" evidence="3">
    <location>
        <position position="171"/>
    </location>
</feature>
<feature type="active site" description="For beta-ketoacyl synthase activity" evidence="3">
    <location>
        <position position="306"/>
    </location>
</feature>
<feature type="active site" description="For beta-ketoacyl synthase activity" evidence="3">
    <location>
        <position position="344"/>
    </location>
</feature>
<feature type="active site" description="For malonyltransferase activity" evidence="5">
    <location>
        <position position="629"/>
    </location>
</feature>
<feature type="active site" description="Proton acceptor; for dehydratase activity" evidence="4">
    <location>
        <position position="952"/>
    </location>
</feature>
<feature type="active site" description="Proton donor; for dehydratase activity" evidence="4">
    <location>
        <position position="1144"/>
    </location>
</feature>
<feature type="modified residue" description="O-(pantetheine 4'-phosphoryl)serine" evidence="2">
    <location>
        <position position="2334"/>
    </location>
</feature>
<evidence type="ECO:0000255" key="1"/>
<evidence type="ECO:0000255" key="2">
    <source>
        <dbReference type="PROSITE-ProRule" id="PRU00258"/>
    </source>
</evidence>
<evidence type="ECO:0000255" key="3">
    <source>
        <dbReference type="PROSITE-ProRule" id="PRU01348"/>
    </source>
</evidence>
<evidence type="ECO:0000255" key="4">
    <source>
        <dbReference type="PROSITE-ProRule" id="PRU01363"/>
    </source>
</evidence>
<evidence type="ECO:0000255" key="5">
    <source>
        <dbReference type="PROSITE-ProRule" id="PRU10022"/>
    </source>
</evidence>
<evidence type="ECO:0000269" key="6">
    <source>
    </source>
</evidence>
<evidence type="ECO:0000303" key="7">
    <source>
    </source>
</evidence>
<evidence type="ECO:0000305" key="8">
    <source>
    </source>
</evidence>
<keyword id="KW-0012">Acyltransferase</keyword>
<keyword id="KW-0511">Multifunctional enzyme</keyword>
<keyword id="KW-0521">NADP</keyword>
<keyword id="KW-0560">Oxidoreductase</keyword>
<keyword id="KW-0596">Phosphopantetheine</keyword>
<keyword id="KW-0597">Phosphoprotein</keyword>
<keyword id="KW-1185">Reference proteome</keyword>
<keyword id="KW-0808">Transferase</keyword>
<sequence>MDALHLACHLPGGITSPSGLWDYVYNKKSAQCTVPLDRYNIEGFYHKDGSRAGVMSVDGGYFIQEDVRKFDPSFFGINNLEASYMDPQQRKLLEVVYECFENAGLSMEDVSGSNTAVFVGNFTVDYSVMQSRDTDYVHRLAATGGGTSIMSNRISHVFNLHGPSFTLDTACSSTIYALHQAVNAIKNGDCDAAIVAGANLITSPEQHFGTAKGGFLSPTSACHTFDTSADGYARAEALNAIYITRLSSAMKSDRKIHAVIRGTAINANGKTPGITLPDAKMQAAVIRKAYQNAGLSFADTDYVECHGTGTPVGDPIEVDGIAACFAGREGEPLRIGSVKTNMGHSEAASGLTSIIKVALAFEHGMIPPTYGVKNLNPKLKLKERNMKVLTEVEAWPRALRRAGVNSFGYGGANGHVILESIDSYFVGSLVSSPITRALSNPYESEKDYVVVIPFSASSGKSLEARRKQAIETVEKTEASALKPLAAAMSKRQTKMRLRDYVLASASSNSQPSLIDMTDVGDKASPGTQPLPFAFVFTGQGAQYANMAKELVEQDFGFLTSIRDLDEVLQSLPAEYKPSWTLEQTILDKPATSKINDVTRSQPICTAVQVSLVNMLQSWGVSPSAVIGHSSGEIAAAYGSGLLTASEAILAAYFRGFAVGQLQSRGAMMAVGITPDGAIALIEQLGLKEVRVACVNAPESVTLSGAVKDIDSLQAKLQKEKKFARKLETGGRAYHSHMMAEIGDLYESLVTPYITVKKVAEMEVKMFSTVGHSIDALGTVDLSTEMASYFRKNLEQPVQFSAGLANMITSNKYHLIEIGPHSALKGPIQQIRTSAKRDKEGVPYSPTLVRKENSYVCLKKLAGTLFSYGHSLDWYAVNNVPRYHALPTPPLASYPWDYSKPLPWHEPRASVEHRLRKHVRHELLGTRATAGNGIEWCWRNIPRMSEMPWLRDHKLGESQVVLPGAAYMAMAIEAFSQVHEIKGKLIAGEPFSFEFENVNISAAFVVPDENDAEADKTELHTLMSPRKISTANISGNWHEFSISSWVSGIATLHCMGSIRVMESTLKPKDGSVMISGNGHEVWGMSRWYAKAKEEGLNFGPTFQSLTSLHTDGNRTSTDSIATTLLDPPSAAATGMFYAVHPITIDACFQATIMGGTAGNINTLRAYVPVFVSSCSIQIPRGGSASLGEEEVRIHSRMEKTGFSTRAVSFTLRLPDGTPVIDMPHLRMNEYTGKAPVEPETSIYLQRQPCLRVQWKPDVLRLRPGSDGAIREYIASFAAQQSDDLKDNGALVVFAALLDLFGHKVPRMSVLELGQESQWTPKDCQSILGKGTAFPRFRLWNDGKLGDNSKIIVDNAKNSDSYDVVLIPHLSVSNKIWAEAADAIISLISDDGIIITRRSKDVVSALKTSGFVVLELPNETLVAVRSPKQTGLENKEVVIVKPNEASPSINSLATAVATHLKNAGVVQLRTVTIDSIETVNLNSQVVCVSLLEMEHEFLATINSEDMDRFRKITDNVGDLLWLTGANMLSTPNPDLTLSSGLSRALMLEQPALRYAILDVGADISKPNSMELICNSVSASLVFRHATDDKEFIQKDGIVYISRFVPDVELNALFRHRMTPDSMKLVPLREVGPAKLSIGQVGMTDTIHFQQISERKTTPPAGFVDVDLRAIGLNAKDVYALNGRAETRSATTALDFGGVISAVGPGIEHLKVGDRVAGFIPNHFGTTERVTVQAVHKMLPEEEFTVLPTLLTVYCTALVALRDRAHLRAGESILIHSGAGAFGLAAITMAKYMGATVFATVGSHSKREYLIKEMGVPTENIFNSRSASFMEDILAATGGRGVNVIVNSLVGDLMHASWSCIAPFGRFVEIGKRELIDAGKLDMRVFLKNATFTAFDLSEFFYAEDSYYQDIVYGYTAEVIEMYRAGIIKASPIATFDVAEIGQAYRYFGNKDRVGKVVVSMENSRSLIQVVPASYQSVFHPEKTYLLVGCLGGLGRSLSRWMMSRGARKFCFLGRSGCDKPSAAELVNRLRDAGASVTVVRGDVSNEDQVREAVAACSKKGPIGGVVQAAMGLSEALFSVMTNKAWHTGIQPKWKGSWNLHHALEGHDADLDFFLLTSSISGSCGTATESNYCSANGFLDSFARWRRSQGKPAVSVGLGMISEVGYLHENPDIEAMLLRKGIQPLNEDEFLQVLDYGISGPGSDSEFGRGVSMTSESAHILTGLESYGVRKLMAQGFEVNNGVMDESRTSILAASLLSEKDAKEEEKGADVGQLLAAAEWVKDVPANALSMLIPEASAPTMLDAILRLTKKRFSNLILMQLDAVDDSAPLPSFGVDSMLAAEFRTWFFNTFKIDVPFLDIVSPQKSLHTLAEFIEEKLVASWAS</sequence>
<dbReference type="EC" id="2.3.1.-" evidence="6"/>
<dbReference type="EMBL" id="ABDF02000086">
    <property type="protein sequence ID" value="EHK18438.1"/>
    <property type="molecule type" value="Genomic_DNA"/>
</dbReference>
<dbReference type="RefSeq" id="XP_013952638.1">
    <property type="nucleotide sequence ID" value="XM_014097163.1"/>
</dbReference>
<dbReference type="SMR" id="G9N4B2"/>
<dbReference type="STRING" id="413071.G9N4B2"/>
<dbReference type="EnsemblFungi" id="EHK18438">
    <property type="protein sequence ID" value="EHK18438"/>
    <property type="gene ID" value="TRIVIDRAFT_47407"/>
</dbReference>
<dbReference type="GeneID" id="25794654"/>
<dbReference type="VEuPathDB" id="FungiDB:TRIVIDRAFT_47407"/>
<dbReference type="eggNOG" id="KOG1202">
    <property type="taxonomic scope" value="Eukaryota"/>
</dbReference>
<dbReference type="HOGENOM" id="CLU_000022_31_4_1"/>
<dbReference type="InParanoid" id="G9N4B2"/>
<dbReference type="OMA" id="TSACHTF"/>
<dbReference type="OrthoDB" id="329835at2759"/>
<dbReference type="Proteomes" id="UP000007115">
    <property type="component" value="Unassembled WGS sequence"/>
</dbReference>
<dbReference type="GO" id="GO:0004315">
    <property type="term" value="F:3-oxoacyl-[acyl-carrier-protein] synthase activity"/>
    <property type="evidence" value="ECO:0007669"/>
    <property type="project" value="InterPro"/>
</dbReference>
<dbReference type="GO" id="GO:0004312">
    <property type="term" value="F:fatty acid synthase activity"/>
    <property type="evidence" value="ECO:0007669"/>
    <property type="project" value="TreeGrafter"/>
</dbReference>
<dbReference type="GO" id="GO:0016491">
    <property type="term" value="F:oxidoreductase activity"/>
    <property type="evidence" value="ECO:0007669"/>
    <property type="project" value="UniProtKB-KW"/>
</dbReference>
<dbReference type="GO" id="GO:0006633">
    <property type="term" value="P:fatty acid biosynthetic process"/>
    <property type="evidence" value="ECO:0007669"/>
    <property type="project" value="InterPro"/>
</dbReference>
<dbReference type="GO" id="GO:0044550">
    <property type="term" value="P:secondary metabolite biosynthetic process"/>
    <property type="evidence" value="ECO:0007669"/>
    <property type="project" value="TreeGrafter"/>
</dbReference>
<dbReference type="CDD" id="cd05195">
    <property type="entry name" value="enoyl_red"/>
    <property type="match status" value="1"/>
</dbReference>
<dbReference type="CDD" id="cd05274">
    <property type="entry name" value="KR_FAS_SDR_x"/>
    <property type="match status" value="1"/>
</dbReference>
<dbReference type="CDD" id="cd00833">
    <property type="entry name" value="PKS"/>
    <property type="match status" value="1"/>
</dbReference>
<dbReference type="FunFam" id="3.40.50.720:FF:000209">
    <property type="entry name" value="Polyketide synthase Pks12"/>
    <property type="match status" value="1"/>
</dbReference>
<dbReference type="Gene3D" id="3.40.47.10">
    <property type="match status" value="1"/>
</dbReference>
<dbReference type="Gene3D" id="3.40.366.10">
    <property type="entry name" value="Malonyl-Coenzyme A Acyl Carrier Protein, domain 2"/>
    <property type="match status" value="1"/>
</dbReference>
<dbReference type="Gene3D" id="3.90.180.10">
    <property type="entry name" value="Medium-chain alcohol dehydrogenases, catalytic domain"/>
    <property type="match status" value="1"/>
</dbReference>
<dbReference type="Gene3D" id="3.40.50.720">
    <property type="entry name" value="NAD(P)-binding Rossmann-like Domain"/>
    <property type="match status" value="2"/>
</dbReference>
<dbReference type="Gene3D" id="3.10.129.110">
    <property type="entry name" value="Polyketide synthase dehydratase"/>
    <property type="match status" value="1"/>
</dbReference>
<dbReference type="InterPro" id="IPR001227">
    <property type="entry name" value="Ac_transferase_dom_sf"/>
</dbReference>
<dbReference type="InterPro" id="IPR036736">
    <property type="entry name" value="ACP-like_sf"/>
</dbReference>
<dbReference type="InterPro" id="IPR014043">
    <property type="entry name" value="Acyl_transferase_dom"/>
</dbReference>
<dbReference type="InterPro" id="IPR016035">
    <property type="entry name" value="Acyl_Trfase/lysoPLipase"/>
</dbReference>
<dbReference type="InterPro" id="IPR013149">
    <property type="entry name" value="ADH-like_C"/>
</dbReference>
<dbReference type="InterPro" id="IPR013154">
    <property type="entry name" value="ADH-like_N"/>
</dbReference>
<dbReference type="InterPro" id="IPR011032">
    <property type="entry name" value="GroES-like_sf"/>
</dbReference>
<dbReference type="InterPro" id="IPR018201">
    <property type="entry name" value="Ketoacyl_synth_AS"/>
</dbReference>
<dbReference type="InterPro" id="IPR014031">
    <property type="entry name" value="Ketoacyl_synth_C"/>
</dbReference>
<dbReference type="InterPro" id="IPR014030">
    <property type="entry name" value="Ketoacyl_synth_N"/>
</dbReference>
<dbReference type="InterPro" id="IPR016036">
    <property type="entry name" value="Malonyl_transacylase_ACP-bd"/>
</dbReference>
<dbReference type="InterPro" id="IPR036291">
    <property type="entry name" value="NAD(P)-bd_dom_sf"/>
</dbReference>
<dbReference type="InterPro" id="IPR056501">
    <property type="entry name" value="NAD-bd_HRPKS_sdrA"/>
</dbReference>
<dbReference type="InterPro" id="IPR032821">
    <property type="entry name" value="PKS_assoc"/>
</dbReference>
<dbReference type="InterPro" id="IPR020841">
    <property type="entry name" value="PKS_Beta-ketoAc_synthase_dom"/>
</dbReference>
<dbReference type="InterPro" id="IPR042104">
    <property type="entry name" value="PKS_dehydratase_sf"/>
</dbReference>
<dbReference type="InterPro" id="IPR020807">
    <property type="entry name" value="PKS_DH"/>
</dbReference>
<dbReference type="InterPro" id="IPR049551">
    <property type="entry name" value="PKS_DH_C"/>
</dbReference>
<dbReference type="InterPro" id="IPR049552">
    <property type="entry name" value="PKS_DH_N"/>
</dbReference>
<dbReference type="InterPro" id="IPR020843">
    <property type="entry name" value="PKS_ER"/>
</dbReference>
<dbReference type="InterPro" id="IPR013968">
    <property type="entry name" value="PKS_KR"/>
</dbReference>
<dbReference type="InterPro" id="IPR049900">
    <property type="entry name" value="PKS_mFAS_DH"/>
</dbReference>
<dbReference type="InterPro" id="IPR050091">
    <property type="entry name" value="PKS_NRPS_Biosynth_Enz"/>
</dbReference>
<dbReference type="InterPro" id="IPR009081">
    <property type="entry name" value="PP-bd_ACP"/>
</dbReference>
<dbReference type="InterPro" id="IPR016039">
    <property type="entry name" value="Thiolase-like"/>
</dbReference>
<dbReference type="PANTHER" id="PTHR43775">
    <property type="entry name" value="FATTY ACID SYNTHASE"/>
    <property type="match status" value="1"/>
</dbReference>
<dbReference type="PANTHER" id="PTHR43775:SF50">
    <property type="entry name" value="HIGHLY REDUCING POLYKETIDE SYNTHASE SRDA"/>
    <property type="match status" value="1"/>
</dbReference>
<dbReference type="Pfam" id="PF00698">
    <property type="entry name" value="Acyl_transf_1"/>
    <property type="match status" value="1"/>
</dbReference>
<dbReference type="Pfam" id="PF08240">
    <property type="entry name" value="ADH_N"/>
    <property type="match status" value="1"/>
</dbReference>
<dbReference type="Pfam" id="PF00107">
    <property type="entry name" value="ADH_zinc_N"/>
    <property type="match status" value="1"/>
</dbReference>
<dbReference type="Pfam" id="PF16197">
    <property type="entry name" value="KAsynt_C_assoc"/>
    <property type="match status" value="1"/>
</dbReference>
<dbReference type="Pfam" id="PF00109">
    <property type="entry name" value="ketoacyl-synt"/>
    <property type="match status" value="1"/>
</dbReference>
<dbReference type="Pfam" id="PF02801">
    <property type="entry name" value="Ketoacyl-synt_C"/>
    <property type="match status" value="1"/>
</dbReference>
<dbReference type="Pfam" id="PF08659">
    <property type="entry name" value="KR"/>
    <property type="match status" value="1"/>
</dbReference>
<dbReference type="Pfam" id="PF23114">
    <property type="entry name" value="NAD-bd_HRPKS_sdrA"/>
    <property type="match status" value="1"/>
</dbReference>
<dbReference type="Pfam" id="PF21089">
    <property type="entry name" value="PKS_DH_N"/>
    <property type="match status" value="1"/>
</dbReference>
<dbReference type="Pfam" id="PF14765">
    <property type="entry name" value="PS-DH"/>
    <property type="match status" value="1"/>
</dbReference>
<dbReference type="SMART" id="SM00827">
    <property type="entry name" value="PKS_AT"/>
    <property type="match status" value="1"/>
</dbReference>
<dbReference type="SMART" id="SM00826">
    <property type="entry name" value="PKS_DH"/>
    <property type="match status" value="1"/>
</dbReference>
<dbReference type="SMART" id="SM00829">
    <property type="entry name" value="PKS_ER"/>
    <property type="match status" value="1"/>
</dbReference>
<dbReference type="SMART" id="SM00822">
    <property type="entry name" value="PKS_KR"/>
    <property type="match status" value="1"/>
</dbReference>
<dbReference type="SMART" id="SM00825">
    <property type="entry name" value="PKS_KS"/>
    <property type="match status" value="1"/>
</dbReference>
<dbReference type="SUPFAM" id="SSF47336">
    <property type="entry name" value="ACP-like"/>
    <property type="match status" value="1"/>
</dbReference>
<dbReference type="SUPFAM" id="SSF52151">
    <property type="entry name" value="FabD/lysophospholipase-like"/>
    <property type="match status" value="1"/>
</dbReference>
<dbReference type="SUPFAM" id="SSF50129">
    <property type="entry name" value="GroES-like"/>
    <property type="match status" value="1"/>
</dbReference>
<dbReference type="SUPFAM" id="SSF51735">
    <property type="entry name" value="NAD(P)-binding Rossmann-fold domains"/>
    <property type="match status" value="2"/>
</dbReference>
<dbReference type="SUPFAM" id="SSF55048">
    <property type="entry name" value="Probable ACP-binding domain of malonyl-CoA ACP transacylase"/>
    <property type="match status" value="1"/>
</dbReference>
<dbReference type="SUPFAM" id="SSF53901">
    <property type="entry name" value="Thiolase-like"/>
    <property type="match status" value="1"/>
</dbReference>
<dbReference type="PROSITE" id="PS50075">
    <property type="entry name" value="CARRIER"/>
    <property type="match status" value="1"/>
</dbReference>
<dbReference type="PROSITE" id="PS00606">
    <property type="entry name" value="KS3_1"/>
    <property type="match status" value="1"/>
</dbReference>
<dbReference type="PROSITE" id="PS52004">
    <property type="entry name" value="KS3_2"/>
    <property type="match status" value="1"/>
</dbReference>
<dbReference type="PROSITE" id="PS52019">
    <property type="entry name" value="PKS_MFAS_DH"/>
    <property type="match status" value="1"/>
</dbReference>
<reference key="1">
    <citation type="journal article" date="2011" name="Genome Biol.">
        <title>Comparative genome sequence analysis underscores mycoparasitism as the ancestral life style of Trichoderma.</title>
        <authorList>
            <person name="Kubicek C.P."/>
            <person name="Herrera-Estrella A."/>
            <person name="Seidl-Seiboth V."/>
            <person name="Martinez D.A."/>
            <person name="Druzhinina I.S."/>
            <person name="Thon M."/>
            <person name="Zeilinger S."/>
            <person name="Casas-Flores S."/>
            <person name="Horwitz B.A."/>
            <person name="Mukherjee P.K."/>
            <person name="Mukherjee M."/>
            <person name="Kredics L."/>
            <person name="Alcaraz L.D."/>
            <person name="Aerts A."/>
            <person name="Antal Z."/>
            <person name="Atanasova L."/>
            <person name="Cervantes-Badillo M.G."/>
            <person name="Challacombe J."/>
            <person name="Chertkov O."/>
            <person name="McCluskey K."/>
            <person name="Coulpier F."/>
            <person name="Deshpande N."/>
            <person name="von Doehren H."/>
            <person name="Ebbole D.J."/>
            <person name="Esquivel-Naranjo E.U."/>
            <person name="Fekete E."/>
            <person name="Flipphi M."/>
            <person name="Glaser F."/>
            <person name="Gomez-Rodriguez E.Y."/>
            <person name="Gruber S."/>
            <person name="Han C."/>
            <person name="Henrissat B."/>
            <person name="Hermosa R."/>
            <person name="Hernandez-Onate M."/>
            <person name="Karaffa L."/>
            <person name="Kosti I."/>
            <person name="Le Crom S."/>
            <person name="Lindquist E."/>
            <person name="Lucas S."/>
            <person name="Luebeck M."/>
            <person name="Luebeck P.S."/>
            <person name="Margeot A."/>
            <person name="Metz B."/>
            <person name="Misra M."/>
            <person name="Nevalainen H."/>
            <person name="Omann M."/>
            <person name="Packer N."/>
            <person name="Perrone G."/>
            <person name="Uresti-Rivera E.E."/>
            <person name="Salamov A."/>
            <person name="Schmoll M."/>
            <person name="Seiboth B."/>
            <person name="Shapiro H."/>
            <person name="Sukno S."/>
            <person name="Tamayo-Ramos J.A."/>
            <person name="Tisch D."/>
            <person name="Wiest A."/>
            <person name="Wilkinson H.H."/>
            <person name="Zhang M."/>
            <person name="Coutinho P.M."/>
            <person name="Kenerley C.M."/>
            <person name="Monte E."/>
            <person name="Baker S.E."/>
            <person name="Grigoriev I.V."/>
        </authorList>
    </citation>
    <scope>NUCLEOTIDE SEQUENCE [LARGE SCALE GENOMIC DNA]</scope>
    <source>
        <strain>Gv29-8 / FGSC 10586</strain>
    </source>
</reference>
<reference key="2">
    <citation type="journal article" date="2019" name="J. Am. Chem. Soc.">
        <title>Fungal highly reducing polyketide synthases biosynthesize salicylaldehydes that are precursors to epoxycyclohexenol natural products.</title>
        <authorList>
            <person name="Liu L."/>
            <person name="Tang M.C."/>
            <person name="Tang Y."/>
        </authorList>
    </citation>
    <scope>FUNCTION</scope>
    <scope>DISRUPTION PHENOTYPE</scope>
    <scope>CATALYTIC ACTIVITY</scope>
    <scope>DOMAIN</scope>
    <scope>PATHWAY</scope>
</reference>
<name>VIRA_HYPVG</name>
<accession>G9N4B2</accession>
<comment type="function">
    <text evidence="6">Highly reducing polyketide synthase; part of the gene cluster that mediates the biosynthesis of virensols and trichoxide, fungal natural products that contain or are derived from a salicylaldehyde core (PubMed:31790246). The pathway begins with the synthesis of the reduced chain in virensol C by the highly reducing polyketide synthase virA via condensation of one acetate and 8 malonate units (PubMed:31790246). VirA has interesting programming rules since the first 2 ketides are fully reduced, the 3 following ketides undergo beta-dehydration, and the last 3 ketides are only reduced to beta-hydroxys to yield the trihydroxy portion (PubMed:31790246). The production of aldehyde virensol C by virA alone is surprising, since virA does not contain a reductase (R) domain that is typically associated with reductive product release in HRPKS (PubMed:31790246). The cupin-domain enzyme virC is involved in enhancing virA product turnover (PubMed:31790246). The short-chain dehydrogenase virB then oxidizes the C-7 alcohol of virensol C to a ketone, yielding virensol D (PubMed:31790246). Virensol D is further transformed to salicylaldehyde 5-deoxyaurocitrin by the short-chain dehydrogenase virD (PubMed:31790246). VirD catalyzes the dehydrogenation of C-3 to form the beta-ketone aldehyde, which is followed by the generation of the nucleophilic C-2 that is required for the intramolecular aldol condensation between C-2 and C-7, itself followed by dehydration and aromatization which leads to salicylaldehyde 5-deoxyaurocitrin (PubMed:31790246). While the dehydrogenation of virensol D is definitely catalyzed by virD, the aldol condensation and dehydration may be uncatalyzed or assisted by virD (PubMed:31790246). The short chain dehydrogenase virG then converts salicylaldehyde 5-deoxyaurocitrin into virensol B which is further hydroxylated by the cytochrome P450 monooxygenase virE to yield the hydroquinone virensol A (PubMed:31790246). VirI then may oxidize virensol A to form the quinone, while virH performs the epoxidation (PubMed:31790246). Finally, the two remaining short-chain dehydrogenases, virK and virL, are probably responsible for reducing the ketones to the corresponding alcohols to furnish the epoxycyclohexanol structure in trichoxide (PubMed:31790246).</text>
</comment>
<comment type="pathway">
    <text evidence="6">Secondary metabolite biosynthesis.</text>
</comment>
<comment type="domain">
    <text evidence="8">Multidomain protein; including a ketosynthase (KS) that catalyzes repeated decarboxylative condensation to elongate the polyketide backbone; a malonyl-CoA:ACP transacylase (MAT) that selects and transfers the extender unit malonyl-CoA; a dehydratase (DH) domain that reduces hydroxyl groups to enoyl groups; an enoyl reductase (ER) domain that reduces enoyl groups to alkyl group; a ketoreductase (KR) domain that catalyzes beta-ketoreduction steps; and an acyl-carrier protein (ACP) that serves as the tether of the growing and completed polyketide via its phosphopantetheinyl arm.</text>
</comment>
<comment type="disruption phenotype">
    <text evidence="6">Abolishes the production of trichoxide, virensol A, virensol B and salicylaldehyde 5-deoxyaurocitrin.</text>
</comment>
<gene>
    <name evidence="7" type="primary">virA</name>
    <name type="ORF">TRIVIDRAFT_47407</name>
</gene>
<proteinExistence type="evidence at protein level"/>
<protein>
    <recommendedName>
        <fullName evidence="7">Highly reducing polyketide synthase virA</fullName>
        <shortName evidence="7">HRPKS virA</shortName>
        <ecNumber evidence="6">2.3.1.-</ecNumber>
    </recommendedName>
    <alternativeName>
        <fullName evidence="7">Trichoxide biosynthesis protein virA</fullName>
    </alternativeName>
    <alternativeName>
        <fullName evidence="7">Virensol biosynthesis cluster protein A</fullName>
    </alternativeName>
</protein>